<accession>C1CG43</accession>
<feature type="chain" id="PRO_1000197126" description="N-(5'-phosphoribosyl)anthranilate isomerase">
    <location>
        <begin position="1"/>
        <end position="199"/>
    </location>
</feature>
<evidence type="ECO:0000255" key="1">
    <source>
        <dbReference type="HAMAP-Rule" id="MF_00135"/>
    </source>
</evidence>
<organism>
    <name type="scientific">Streptococcus pneumoniae (strain JJA)</name>
    <dbReference type="NCBI Taxonomy" id="488222"/>
    <lineage>
        <taxon>Bacteria</taxon>
        <taxon>Bacillati</taxon>
        <taxon>Bacillota</taxon>
        <taxon>Bacilli</taxon>
        <taxon>Lactobacillales</taxon>
        <taxon>Streptococcaceae</taxon>
        <taxon>Streptococcus</taxon>
    </lineage>
</organism>
<name>TRPF_STRZJ</name>
<keyword id="KW-0028">Amino-acid biosynthesis</keyword>
<keyword id="KW-0057">Aromatic amino acid biosynthesis</keyword>
<keyword id="KW-0413">Isomerase</keyword>
<keyword id="KW-0822">Tryptophan biosynthesis</keyword>
<gene>
    <name evidence="1" type="primary">trpF</name>
    <name type="ordered locus">SPJ_1721</name>
</gene>
<sequence length="199" mass="21290">MTKVKICGLSTKEAVETAVSAGADYIGFVFAPSKRQVTLEEAAELAKLIPADVKKVGVFVSPSRVELLEAIDKVGLDLVQVHGQVADDLFENLPCASIQAVQVDGNGHVPNSQADYLLFDAPVAGSGQPFDWGQLDTTGLAQPFFIAGGLNEDNVVKAIQHFTPYAVDVSSGVETDGQKDHEKIRRFIERVKHGISGTK</sequence>
<reference key="1">
    <citation type="journal article" date="2010" name="Genome Biol.">
        <title>Structure and dynamics of the pan-genome of Streptococcus pneumoniae and closely related species.</title>
        <authorList>
            <person name="Donati C."/>
            <person name="Hiller N.L."/>
            <person name="Tettelin H."/>
            <person name="Muzzi A."/>
            <person name="Croucher N.J."/>
            <person name="Angiuoli S.V."/>
            <person name="Oggioni M."/>
            <person name="Dunning Hotopp J.C."/>
            <person name="Hu F.Z."/>
            <person name="Riley D.R."/>
            <person name="Covacci A."/>
            <person name="Mitchell T.J."/>
            <person name="Bentley S.D."/>
            <person name="Kilian M."/>
            <person name="Ehrlich G.D."/>
            <person name="Rappuoli R."/>
            <person name="Moxon E.R."/>
            <person name="Masignani V."/>
        </authorList>
    </citation>
    <scope>NUCLEOTIDE SEQUENCE [LARGE SCALE GENOMIC DNA]</scope>
    <source>
        <strain>JJA</strain>
    </source>
</reference>
<comment type="catalytic activity">
    <reaction evidence="1">
        <text>N-(5-phospho-beta-D-ribosyl)anthranilate = 1-(2-carboxyphenylamino)-1-deoxy-D-ribulose 5-phosphate</text>
        <dbReference type="Rhea" id="RHEA:21540"/>
        <dbReference type="ChEBI" id="CHEBI:18277"/>
        <dbReference type="ChEBI" id="CHEBI:58613"/>
        <dbReference type="EC" id="5.3.1.24"/>
    </reaction>
</comment>
<comment type="pathway">
    <text evidence="1">Amino-acid biosynthesis; L-tryptophan biosynthesis; L-tryptophan from chorismate: step 3/5.</text>
</comment>
<comment type="similarity">
    <text evidence="1">Belongs to the TrpF family.</text>
</comment>
<proteinExistence type="inferred from homology"/>
<dbReference type="EC" id="5.3.1.24" evidence="1"/>
<dbReference type="EMBL" id="CP000919">
    <property type="protein sequence ID" value="ACO18930.1"/>
    <property type="molecule type" value="Genomic_DNA"/>
</dbReference>
<dbReference type="RefSeq" id="WP_000169894.1">
    <property type="nucleotide sequence ID" value="NC_012466.1"/>
</dbReference>
<dbReference type="SMR" id="C1CG43"/>
<dbReference type="KEGG" id="sjj:SPJ_1721"/>
<dbReference type="HOGENOM" id="CLU_076364_1_0_9"/>
<dbReference type="UniPathway" id="UPA00035">
    <property type="reaction ID" value="UER00042"/>
</dbReference>
<dbReference type="Proteomes" id="UP000002206">
    <property type="component" value="Chromosome"/>
</dbReference>
<dbReference type="GO" id="GO:0004640">
    <property type="term" value="F:phosphoribosylanthranilate isomerase activity"/>
    <property type="evidence" value="ECO:0007669"/>
    <property type="project" value="UniProtKB-UniRule"/>
</dbReference>
<dbReference type="GO" id="GO:0000162">
    <property type="term" value="P:L-tryptophan biosynthetic process"/>
    <property type="evidence" value="ECO:0007669"/>
    <property type="project" value="UniProtKB-UniRule"/>
</dbReference>
<dbReference type="CDD" id="cd00405">
    <property type="entry name" value="PRAI"/>
    <property type="match status" value="1"/>
</dbReference>
<dbReference type="FunFam" id="3.20.20.70:FF:000075">
    <property type="entry name" value="Tryptophan biosynthesis protein TRP1"/>
    <property type="match status" value="1"/>
</dbReference>
<dbReference type="Gene3D" id="3.20.20.70">
    <property type="entry name" value="Aldolase class I"/>
    <property type="match status" value="1"/>
</dbReference>
<dbReference type="HAMAP" id="MF_00135">
    <property type="entry name" value="PRAI"/>
    <property type="match status" value="1"/>
</dbReference>
<dbReference type="InterPro" id="IPR013785">
    <property type="entry name" value="Aldolase_TIM"/>
</dbReference>
<dbReference type="InterPro" id="IPR001240">
    <property type="entry name" value="PRAI_dom"/>
</dbReference>
<dbReference type="InterPro" id="IPR011060">
    <property type="entry name" value="RibuloseP-bd_barrel"/>
</dbReference>
<dbReference type="InterPro" id="IPR044643">
    <property type="entry name" value="TrpF_fam"/>
</dbReference>
<dbReference type="NCBIfam" id="NF002300">
    <property type="entry name" value="PRK01222.1-7"/>
    <property type="match status" value="1"/>
</dbReference>
<dbReference type="PANTHER" id="PTHR42894">
    <property type="entry name" value="N-(5'-PHOSPHORIBOSYL)ANTHRANILATE ISOMERASE"/>
    <property type="match status" value="1"/>
</dbReference>
<dbReference type="PANTHER" id="PTHR42894:SF1">
    <property type="entry name" value="N-(5'-PHOSPHORIBOSYL)ANTHRANILATE ISOMERASE"/>
    <property type="match status" value="1"/>
</dbReference>
<dbReference type="Pfam" id="PF00697">
    <property type="entry name" value="PRAI"/>
    <property type="match status" value="1"/>
</dbReference>
<dbReference type="SUPFAM" id="SSF51366">
    <property type="entry name" value="Ribulose-phoshate binding barrel"/>
    <property type="match status" value="1"/>
</dbReference>
<protein>
    <recommendedName>
        <fullName evidence="1">N-(5'-phosphoribosyl)anthranilate isomerase</fullName>
        <shortName evidence="1">PRAI</shortName>
        <ecNumber evidence="1">5.3.1.24</ecNumber>
    </recommendedName>
</protein>